<feature type="chain" id="PRO_0000081372" description="Uncharacterized response regulatory protein VV1_0503">
    <location>
        <begin position="1"/>
        <end position="242"/>
    </location>
</feature>
<feature type="domain" description="Response regulatory" evidence="2">
    <location>
        <begin position="3"/>
        <end position="116"/>
    </location>
</feature>
<feature type="domain" description="HTH LytTR-type" evidence="1">
    <location>
        <begin position="139"/>
        <end position="240"/>
    </location>
</feature>
<feature type="modified residue" description="4-aspartylphosphate" evidence="2">
    <location>
        <position position="54"/>
    </location>
</feature>
<dbReference type="EMBL" id="AE016795">
    <property type="protein sequence ID" value="AAO09022.1"/>
    <property type="molecule type" value="Genomic_DNA"/>
</dbReference>
<dbReference type="SMR" id="Q8DET1"/>
<dbReference type="KEGG" id="vvu:VV1_0503"/>
<dbReference type="HOGENOM" id="CLU_000445_14_1_6"/>
<dbReference type="Proteomes" id="UP000002275">
    <property type="component" value="Chromosome 1"/>
</dbReference>
<dbReference type="GO" id="GO:0005829">
    <property type="term" value="C:cytosol"/>
    <property type="evidence" value="ECO:0007669"/>
    <property type="project" value="TreeGrafter"/>
</dbReference>
<dbReference type="GO" id="GO:0032993">
    <property type="term" value="C:protein-DNA complex"/>
    <property type="evidence" value="ECO:0007669"/>
    <property type="project" value="TreeGrafter"/>
</dbReference>
<dbReference type="GO" id="GO:0000156">
    <property type="term" value="F:phosphorelay response regulator activity"/>
    <property type="evidence" value="ECO:0007669"/>
    <property type="project" value="TreeGrafter"/>
</dbReference>
<dbReference type="GO" id="GO:0000976">
    <property type="term" value="F:transcription cis-regulatory region binding"/>
    <property type="evidence" value="ECO:0007669"/>
    <property type="project" value="TreeGrafter"/>
</dbReference>
<dbReference type="GO" id="GO:0006355">
    <property type="term" value="P:regulation of DNA-templated transcription"/>
    <property type="evidence" value="ECO:0007669"/>
    <property type="project" value="TreeGrafter"/>
</dbReference>
<dbReference type="CDD" id="cd17532">
    <property type="entry name" value="REC_LytTR_AlgR-like"/>
    <property type="match status" value="1"/>
</dbReference>
<dbReference type="FunFam" id="3.40.50.2300:FF:000051">
    <property type="entry name" value="Two-component response regulator yehT"/>
    <property type="match status" value="1"/>
</dbReference>
<dbReference type="Gene3D" id="3.40.50.2300">
    <property type="match status" value="1"/>
</dbReference>
<dbReference type="Gene3D" id="2.40.50.1020">
    <property type="entry name" value="LytTr DNA-binding domain"/>
    <property type="match status" value="1"/>
</dbReference>
<dbReference type="InterPro" id="IPR011006">
    <property type="entry name" value="CheY-like_superfamily"/>
</dbReference>
<dbReference type="InterPro" id="IPR007492">
    <property type="entry name" value="LytTR_DNA-bd_dom"/>
</dbReference>
<dbReference type="InterPro" id="IPR001789">
    <property type="entry name" value="Sig_transdc_resp-reg_receiver"/>
</dbReference>
<dbReference type="InterPro" id="IPR039420">
    <property type="entry name" value="WalR-like"/>
</dbReference>
<dbReference type="NCBIfam" id="NF008677">
    <property type="entry name" value="PRK11697.1"/>
    <property type="match status" value="1"/>
</dbReference>
<dbReference type="PANTHER" id="PTHR48111">
    <property type="entry name" value="REGULATOR OF RPOS"/>
    <property type="match status" value="1"/>
</dbReference>
<dbReference type="PANTHER" id="PTHR48111:SF3">
    <property type="entry name" value="TRANSCRIPTIONAL REGULATORY PROTEIN BTSR"/>
    <property type="match status" value="1"/>
</dbReference>
<dbReference type="Pfam" id="PF04397">
    <property type="entry name" value="LytTR"/>
    <property type="match status" value="1"/>
</dbReference>
<dbReference type="Pfam" id="PF00072">
    <property type="entry name" value="Response_reg"/>
    <property type="match status" value="1"/>
</dbReference>
<dbReference type="SMART" id="SM00850">
    <property type="entry name" value="LytTR"/>
    <property type="match status" value="1"/>
</dbReference>
<dbReference type="SMART" id="SM00448">
    <property type="entry name" value="REC"/>
    <property type="match status" value="1"/>
</dbReference>
<dbReference type="SUPFAM" id="SSF52172">
    <property type="entry name" value="CheY-like"/>
    <property type="match status" value="1"/>
</dbReference>
<dbReference type="PROSITE" id="PS50930">
    <property type="entry name" value="HTH_LYTTR"/>
    <property type="match status" value="1"/>
</dbReference>
<dbReference type="PROSITE" id="PS50110">
    <property type="entry name" value="RESPONSE_REGULATORY"/>
    <property type="match status" value="1"/>
</dbReference>
<reference key="1">
    <citation type="submission" date="2002-12" db="EMBL/GenBank/DDBJ databases">
        <title>Complete genome sequence of Vibrio vulnificus CMCP6.</title>
        <authorList>
            <person name="Rhee J.H."/>
            <person name="Kim S.Y."/>
            <person name="Chung S.S."/>
            <person name="Kim J.J."/>
            <person name="Moon Y.H."/>
            <person name="Jeong H."/>
            <person name="Choy H.E."/>
        </authorList>
    </citation>
    <scope>NUCLEOTIDE SEQUENCE [LARGE SCALE GENOMIC DNA]</scope>
    <source>
        <strain>CMCP6</strain>
    </source>
</reference>
<protein>
    <recommendedName>
        <fullName>Uncharacterized response regulatory protein VV1_0503</fullName>
    </recommendedName>
</protein>
<keyword id="KW-0238">DNA-binding</keyword>
<keyword id="KW-0597">Phosphoprotein</keyword>
<keyword id="KW-0804">Transcription</keyword>
<keyword id="KW-0805">Transcription regulation</keyword>
<keyword id="KW-0902">Two-component regulatory system</keyword>
<name>Y503_VIBVU</name>
<organism>
    <name type="scientific">Vibrio vulnificus (strain CMCP6)</name>
    <dbReference type="NCBI Taxonomy" id="216895"/>
    <lineage>
        <taxon>Bacteria</taxon>
        <taxon>Pseudomonadati</taxon>
        <taxon>Pseudomonadota</taxon>
        <taxon>Gammaproteobacteria</taxon>
        <taxon>Vibrionales</taxon>
        <taxon>Vibrionaceae</taxon>
        <taxon>Vibrio</taxon>
    </lineage>
</organism>
<sequence length="242" mass="26841">MLTALVIDDEPFAREELTDLLSETGDIDVIGDAANAIVGLKKINELKPDVVFLDIQMPQVTGIELLGMMDPDTMPYVVFVTAYDQYAIQAFEDNAFDYLLKPVDPERLRKTVKRLSKAASHSALSQHIASLAPETLDQIPCIGHNRIVIMATESVECAYSDISGVHVRSASQTASTQLTLKVLEEKTSLVRCHRQYLISIKAISEIKLLENGLAEIITKTGFEVPVSRRYLKLLKEMLGLSH</sequence>
<accession>Q8DET1</accession>
<gene>
    <name type="ordered locus">VV1_0503</name>
</gene>
<evidence type="ECO:0000255" key="1">
    <source>
        <dbReference type="PROSITE-ProRule" id="PRU00112"/>
    </source>
</evidence>
<evidence type="ECO:0000255" key="2">
    <source>
        <dbReference type="PROSITE-ProRule" id="PRU00169"/>
    </source>
</evidence>
<proteinExistence type="inferred from homology"/>